<reference key="1">
    <citation type="journal article" date="2007" name="Genes Dev.">
        <title>New insights into Acinetobacter baumannii pathogenesis revealed by high-density pyrosequencing and transposon mutagenesis.</title>
        <authorList>
            <person name="Smith M.G."/>
            <person name="Gianoulis T.A."/>
            <person name="Pukatzki S."/>
            <person name="Mekalanos J.J."/>
            <person name="Ornston L.N."/>
            <person name="Gerstein M."/>
            <person name="Snyder M."/>
        </authorList>
    </citation>
    <scope>NUCLEOTIDE SEQUENCE [LARGE SCALE GENOMIC DNA]</scope>
    <source>
        <strain>ATCC 17978 / DSM 105126 / CIP 53.77 / LMG 1025 / NCDC KC755 / 5377</strain>
    </source>
</reference>
<accession>A3M7Q1</accession>
<dbReference type="EC" id="2.7.4.9" evidence="1"/>
<dbReference type="EMBL" id="CP000521">
    <property type="protein sequence ID" value="ABO12945.2"/>
    <property type="molecule type" value="Genomic_DNA"/>
</dbReference>
<dbReference type="RefSeq" id="WP_000470765.1">
    <property type="nucleotide sequence ID" value="NZ_CP053098.1"/>
</dbReference>
<dbReference type="SMR" id="A3M7Q1"/>
<dbReference type="KEGG" id="acb:A1S_2528"/>
<dbReference type="HOGENOM" id="CLU_049131_0_2_6"/>
<dbReference type="GO" id="GO:0005829">
    <property type="term" value="C:cytosol"/>
    <property type="evidence" value="ECO:0007669"/>
    <property type="project" value="TreeGrafter"/>
</dbReference>
<dbReference type="GO" id="GO:0005524">
    <property type="term" value="F:ATP binding"/>
    <property type="evidence" value="ECO:0007669"/>
    <property type="project" value="UniProtKB-UniRule"/>
</dbReference>
<dbReference type="GO" id="GO:0004798">
    <property type="term" value="F:dTMP kinase activity"/>
    <property type="evidence" value="ECO:0007669"/>
    <property type="project" value="UniProtKB-UniRule"/>
</dbReference>
<dbReference type="GO" id="GO:0006233">
    <property type="term" value="P:dTDP biosynthetic process"/>
    <property type="evidence" value="ECO:0007669"/>
    <property type="project" value="InterPro"/>
</dbReference>
<dbReference type="GO" id="GO:0006235">
    <property type="term" value="P:dTTP biosynthetic process"/>
    <property type="evidence" value="ECO:0007669"/>
    <property type="project" value="UniProtKB-UniRule"/>
</dbReference>
<dbReference type="GO" id="GO:0006227">
    <property type="term" value="P:dUDP biosynthetic process"/>
    <property type="evidence" value="ECO:0007669"/>
    <property type="project" value="TreeGrafter"/>
</dbReference>
<dbReference type="CDD" id="cd01672">
    <property type="entry name" value="TMPK"/>
    <property type="match status" value="1"/>
</dbReference>
<dbReference type="FunFam" id="3.40.50.300:FF:000225">
    <property type="entry name" value="Thymidylate kinase"/>
    <property type="match status" value="1"/>
</dbReference>
<dbReference type="Gene3D" id="3.40.50.300">
    <property type="entry name" value="P-loop containing nucleotide triphosphate hydrolases"/>
    <property type="match status" value="1"/>
</dbReference>
<dbReference type="HAMAP" id="MF_00165">
    <property type="entry name" value="Thymidylate_kinase"/>
    <property type="match status" value="1"/>
</dbReference>
<dbReference type="InterPro" id="IPR027417">
    <property type="entry name" value="P-loop_NTPase"/>
</dbReference>
<dbReference type="InterPro" id="IPR039430">
    <property type="entry name" value="Thymidylate_kin-like_dom"/>
</dbReference>
<dbReference type="InterPro" id="IPR018094">
    <property type="entry name" value="Thymidylate_kinase"/>
</dbReference>
<dbReference type="NCBIfam" id="TIGR00041">
    <property type="entry name" value="DTMP_kinase"/>
    <property type="match status" value="1"/>
</dbReference>
<dbReference type="PANTHER" id="PTHR10344">
    <property type="entry name" value="THYMIDYLATE KINASE"/>
    <property type="match status" value="1"/>
</dbReference>
<dbReference type="PANTHER" id="PTHR10344:SF4">
    <property type="entry name" value="UMP-CMP KINASE 2, MITOCHONDRIAL"/>
    <property type="match status" value="1"/>
</dbReference>
<dbReference type="Pfam" id="PF02223">
    <property type="entry name" value="Thymidylate_kin"/>
    <property type="match status" value="1"/>
</dbReference>
<dbReference type="SUPFAM" id="SSF52540">
    <property type="entry name" value="P-loop containing nucleoside triphosphate hydrolases"/>
    <property type="match status" value="1"/>
</dbReference>
<feature type="chain" id="PRO_1000097368" description="Thymidylate kinase">
    <location>
        <begin position="1"/>
        <end position="199"/>
    </location>
</feature>
<feature type="binding site" evidence="1">
    <location>
        <begin position="7"/>
        <end position="14"/>
    </location>
    <ligand>
        <name>ATP</name>
        <dbReference type="ChEBI" id="CHEBI:30616"/>
    </ligand>
</feature>
<evidence type="ECO:0000255" key="1">
    <source>
        <dbReference type="HAMAP-Rule" id="MF_00165"/>
    </source>
</evidence>
<keyword id="KW-0067">ATP-binding</keyword>
<keyword id="KW-0418">Kinase</keyword>
<keyword id="KW-0545">Nucleotide biosynthesis</keyword>
<keyword id="KW-0547">Nucleotide-binding</keyword>
<keyword id="KW-0808">Transferase</keyword>
<protein>
    <recommendedName>
        <fullName evidence="1">Thymidylate kinase</fullName>
        <ecNumber evidence="1">2.7.4.9</ecNumber>
    </recommendedName>
    <alternativeName>
        <fullName evidence="1">dTMP kinase</fullName>
    </alternativeName>
</protein>
<comment type="function">
    <text evidence="1">Phosphorylation of dTMP to form dTDP in both de novo and salvage pathways of dTTP synthesis.</text>
</comment>
<comment type="catalytic activity">
    <reaction evidence="1">
        <text>dTMP + ATP = dTDP + ADP</text>
        <dbReference type="Rhea" id="RHEA:13517"/>
        <dbReference type="ChEBI" id="CHEBI:30616"/>
        <dbReference type="ChEBI" id="CHEBI:58369"/>
        <dbReference type="ChEBI" id="CHEBI:63528"/>
        <dbReference type="ChEBI" id="CHEBI:456216"/>
        <dbReference type="EC" id="2.7.4.9"/>
    </reaction>
</comment>
<comment type="similarity">
    <text evidence="1">Belongs to the thymidylate kinase family.</text>
</comment>
<organism>
    <name type="scientific">Acinetobacter baumannii (strain ATCC 17978 / DSM 105126 / CIP 53.77 / LMG 1025 / NCDC KC755 / 5377)</name>
    <dbReference type="NCBI Taxonomy" id="400667"/>
    <lineage>
        <taxon>Bacteria</taxon>
        <taxon>Pseudomonadati</taxon>
        <taxon>Pseudomonadota</taxon>
        <taxon>Gammaproteobacteria</taxon>
        <taxon>Moraxellales</taxon>
        <taxon>Moraxellaceae</taxon>
        <taxon>Acinetobacter</taxon>
        <taxon>Acinetobacter calcoaceticus/baumannii complex</taxon>
    </lineage>
</organism>
<gene>
    <name evidence="1" type="primary">tmk</name>
    <name type="ordered locus">A1S_2528</name>
</gene>
<sequence length="199" mass="22868">MFISFEGTEGVGKTTLIRKIHQHFEEQGKQVVLTREPGGTPLAEQIRSMLLAVNHDENMSHDTELLLIYAARAQHLQQVILPALESNKIVLSDRFTDASFAYQCSGRGLSQDKLQLLNQNFVSRMPEVTFWLDAPIELGMNRARERGALDRFEQEKLSFFTKVREGYETLWKVEPERIKRLDATQSPDQVFEQALQYLA</sequence>
<proteinExistence type="inferred from homology"/>
<name>KTHY_ACIBT</name>